<keyword id="KW-0066">ATP synthesis</keyword>
<keyword id="KW-0997">Cell inner membrane</keyword>
<keyword id="KW-1003">Cell membrane</keyword>
<keyword id="KW-0139">CF(1)</keyword>
<keyword id="KW-0375">Hydrogen ion transport</keyword>
<keyword id="KW-0406">Ion transport</keyword>
<keyword id="KW-0472">Membrane</keyword>
<keyword id="KW-0813">Transport</keyword>
<feature type="chain" id="PRO_0000073304" description="ATP synthase gamma chain">
    <location>
        <begin position="1"/>
        <end position="288"/>
    </location>
</feature>
<reference key="1">
    <citation type="journal article" date="2004" name="Nat. Genet.">
        <title>Evidence in the Legionella pneumophila genome for exploitation of host cell functions and high genome plasticity.</title>
        <authorList>
            <person name="Cazalet C."/>
            <person name="Rusniok C."/>
            <person name="Brueggemann H."/>
            <person name="Zidane N."/>
            <person name="Magnier A."/>
            <person name="Ma L."/>
            <person name="Tichit M."/>
            <person name="Jarraud S."/>
            <person name="Bouchier C."/>
            <person name="Vandenesch F."/>
            <person name="Kunst F."/>
            <person name="Etienne J."/>
            <person name="Glaser P."/>
            <person name="Buchrieser C."/>
        </authorList>
    </citation>
    <scope>NUCLEOTIDE SEQUENCE [LARGE SCALE GENOMIC DNA]</scope>
    <source>
        <strain>Paris</strain>
    </source>
</reference>
<gene>
    <name evidence="1" type="primary">atpG</name>
    <name type="ordered locus">lpp3054</name>
</gene>
<protein>
    <recommendedName>
        <fullName evidence="1">ATP synthase gamma chain</fullName>
    </recommendedName>
    <alternativeName>
        <fullName evidence="1">ATP synthase F1 sector gamma subunit</fullName>
    </alternativeName>
    <alternativeName>
        <fullName evidence="1">F-ATPase gamma subunit</fullName>
    </alternativeName>
</protein>
<comment type="function">
    <text evidence="1">Produces ATP from ADP in the presence of a proton gradient across the membrane. The gamma chain is believed to be important in regulating ATPase activity and the flow of protons through the CF(0) complex.</text>
</comment>
<comment type="subunit">
    <text evidence="1">F-type ATPases have 2 components, CF(1) - the catalytic core - and CF(0) - the membrane proton channel. CF(1) has five subunits: alpha(3), beta(3), gamma(1), delta(1), epsilon(1). CF(0) has three main subunits: a, b and c.</text>
</comment>
<comment type="subcellular location">
    <subcellularLocation>
        <location evidence="1">Cell inner membrane</location>
        <topology evidence="1">Peripheral membrane protein</topology>
    </subcellularLocation>
</comment>
<comment type="similarity">
    <text evidence="1">Belongs to the ATPase gamma chain family.</text>
</comment>
<accession>Q5X0P2</accession>
<proteinExistence type="inferred from homology"/>
<evidence type="ECO:0000255" key="1">
    <source>
        <dbReference type="HAMAP-Rule" id="MF_00815"/>
    </source>
</evidence>
<dbReference type="EMBL" id="CR628336">
    <property type="protein sequence ID" value="CAH14207.1"/>
    <property type="molecule type" value="Genomic_DNA"/>
</dbReference>
<dbReference type="RefSeq" id="WP_013102069.1">
    <property type="nucleotide sequence ID" value="NC_006368.1"/>
</dbReference>
<dbReference type="SMR" id="Q5X0P2"/>
<dbReference type="KEGG" id="lpp:lpp3054"/>
<dbReference type="LegioList" id="lpp3054"/>
<dbReference type="HOGENOM" id="CLU_050669_0_1_6"/>
<dbReference type="GO" id="GO:0005886">
    <property type="term" value="C:plasma membrane"/>
    <property type="evidence" value="ECO:0007669"/>
    <property type="project" value="UniProtKB-SubCell"/>
</dbReference>
<dbReference type="GO" id="GO:0045259">
    <property type="term" value="C:proton-transporting ATP synthase complex"/>
    <property type="evidence" value="ECO:0007669"/>
    <property type="project" value="UniProtKB-KW"/>
</dbReference>
<dbReference type="GO" id="GO:0005524">
    <property type="term" value="F:ATP binding"/>
    <property type="evidence" value="ECO:0007669"/>
    <property type="project" value="UniProtKB-UniRule"/>
</dbReference>
<dbReference type="GO" id="GO:0046933">
    <property type="term" value="F:proton-transporting ATP synthase activity, rotational mechanism"/>
    <property type="evidence" value="ECO:0007669"/>
    <property type="project" value="UniProtKB-UniRule"/>
</dbReference>
<dbReference type="GO" id="GO:0042777">
    <property type="term" value="P:proton motive force-driven plasma membrane ATP synthesis"/>
    <property type="evidence" value="ECO:0007669"/>
    <property type="project" value="UniProtKB-UniRule"/>
</dbReference>
<dbReference type="CDD" id="cd12151">
    <property type="entry name" value="F1-ATPase_gamma"/>
    <property type="match status" value="1"/>
</dbReference>
<dbReference type="FunFam" id="1.10.287.80:FF:000005">
    <property type="entry name" value="ATP synthase gamma chain"/>
    <property type="match status" value="1"/>
</dbReference>
<dbReference type="FunFam" id="3.40.1380.10:FF:000006">
    <property type="entry name" value="ATP synthase gamma chain"/>
    <property type="match status" value="1"/>
</dbReference>
<dbReference type="Gene3D" id="3.40.1380.10">
    <property type="match status" value="1"/>
</dbReference>
<dbReference type="Gene3D" id="1.10.287.80">
    <property type="entry name" value="ATP synthase, gamma subunit, helix hairpin domain"/>
    <property type="match status" value="2"/>
</dbReference>
<dbReference type="HAMAP" id="MF_00815">
    <property type="entry name" value="ATP_synth_gamma_bact"/>
    <property type="match status" value="1"/>
</dbReference>
<dbReference type="InterPro" id="IPR035968">
    <property type="entry name" value="ATP_synth_F1_ATPase_gsu"/>
</dbReference>
<dbReference type="InterPro" id="IPR000131">
    <property type="entry name" value="ATP_synth_F1_gsu"/>
</dbReference>
<dbReference type="InterPro" id="IPR023632">
    <property type="entry name" value="ATP_synth_F1_gsu_CS"/>
</dbReference>
<dbReference type="NCBIfam" id="TIGR01146">
    <property type="entry name" value="ATPsyn_F1gamma"/>
    <property type="match status" value="1"/>
</dbReference>
<dbReference type="NCBIfam" id="NF004144">
    <property type="entry name" value="PRK05621.1-1"/>
    <property type="match status" value="1"/>
</dbReference>
<dbReference type="PANTHER" id="PTHR11693">
    <property type="entry name" value="ATP SYNTHASE GAMMA CHAIN"/>
    <property type="match status" value="1"/>
</dbReference>
<dbReference type="PANTHER" id="PTHR11693:SF22">
    <property type="entry name" value="ATP SYNTHASE SUBUNIT GAMMA, MITOCHONDRIAL"/>
    <property type="match status" value="1"/>
</dbReference>
<dbReference type="Pfam" id="PF00231">
    <property type="entry name" value="ATP-synt"/>
    <property type="match status" value="1"/>
</dbReference>
<dbReference type="PRINTS" id="PR00126">
    <property type="entry name" value="ATPASEGAMMA"/>
</dbReference>
<dbReference type="SUPFAM" id="SSF52943">
    <property type="entry name" value="ATP synthase (F1-ATPase), gamma subunit"/>
    <property type="match status" value="1"/>
</dbReference>
<dbReference type="PROSITE" id="PS00153">
    <property type="entry name" value="ATPASE_GAMMA"/>
    <property type="match status" value="1"/>
</dbReference>
<sequence length="288" mass="32560">MAGAKEIRSKISSINKTRKITRAMEMVAASKMRKTQERMRASKPYANKIYEVIKHIARAASEYRHPFMSEREIKRIGIIVVTTDRGLCGGLNSNLFRETIRTIRNWQEHGKEVDIAVIGRKGQAFFRRVGGNILGSIDHLGDTPSINDFIGVVKIMLDAYYNGAIDSLHIVYNEFINTMTQKPFVKQLLPLPKSEEDKKTLGHHWDYIYEPEAKELLDEILERYIELQVYQAVVENIACEQAAKMIAMKSATDNAGDLIKEFQLAYNKARQAAITQELAEIVGGAAAL</sequence>
<name>ATPG_LEGPA</name>
<organism>
    <name type="scientific">Legionella pneumophila (strain Paris)</name>
    <dbReference type="NCBI Taxonomy" id="297246"/>
    <lineage>
        <taxon>Bacteria</taxon>
        <taxon>Pseudomonadati</taxon>
        <taxon>Pseudomonadota</taxon>
        <taxon>Gammaproteobacteria</taxon>
        <taxon>Legionellales</taxon>
        <taxon>Legionellaceae</taxon>
        <taxon>Legionella</taxon>
    </lineage>
</organism>